<sequence length="105" mass="11009">MASITMTTSFLSTTNLTKGSPRITQRRLVVANAAKGAQVESVQMSGERKTEGNNGRREMMFAAAAAAICSVAGVATAEPKRGSAEAKKAYAPVCVTMPTARICRN</sequence>
<comment type="function">
    <text>May be a component of the oxygen-evolving complex.</text>
</comment>
<comment type="subcellular location">
    <subcellularLocation>
        <location>Plastid</location>
        <location>Chloroplast thylakoid membrane</location>
    </subcellularLocation>
    <text>Associated with the photosystem II complex.</text>
</comment>
<comment type="PTM">
    <text>The maturation of the PSII-T precursor to its final form occurs through a two step process. First, a stromal intermediate is formed, which, upon translocation into the thylakoid membrane, is processed to the mature protein.</text>
</comment>
<proteinExistence type="predicted"/>
<accession>P31336</accession>
<protein>
    <recommendedName>
        <fullName>Photosystem II 5 kDa protein, chloroplastic</fullName>
        <shortName>PSII-T</shortName>
    </recommendedName>
    <alternativeName>
        <fullName>Light-regulated unknown 11 kDa protein</fullName>
    </alternativeName>
</protein>
<keyword id="KW-0150">Chloroplast</keyword>
<keyword id="KW-0472">Membrane</keyword>
<keyword id="KW-0602">Photosynthesis</keyword>
<keyword id="KW-0604">Photosystem II</keyword>
<keyword id="KW-0934">Plastid</keyword>
<keyword id="KW-1185">Reference proteome</keyword>
<keyword id="KW-0793">Thylakoid</keyword>
<keyword id="KW-0809">Transit peptide</keyword>
<gene>
    <name type="primary">PSBT</name>
</gene>
<reference key="1">
    <citation type="journal article" date="1995" name="J. Biol. Chem.">
        <title>PSII-T, a new nuclear encoded lumenal protein from photosystem II. Targeting and processing in isolated chloroplasts.</title>
        <authorList>
            <person name="Kapazoglou A."/>
            <person name="Sagliocco F."/>
            <person name="Dure L. III"/>
        </authorList>
    </citation>
    <scope>NUCLEOTIDE SEQUENCE [GENOMIC DNA]</scope>
    <source>
        <strain>cv. Coker 201</strain>
        <tissue>Leaf</tissue>
    </source>
</reference>
<feature type="transit peptide" description="Chloroplast">
    <location>
        <begin position="1"/>
        <end position="77"/>
    </location>
</feature>
<feature type="chain" id="PRO_0000029368" description="Photosystem II 5 kDa protein, chloroplastic">
    <location>
        <begin position="78"/>
        <end position="105"/>
    </location>
</feature>
<name>PST2_GOSHI</name>
<dbReference type="EMBL" id="X54092">
    <property type="protein sequence ID" value="CAA38027.1"/>
    <property type="molecule type" value="Genomic_DNA"/>
</dbReference>
<dbReference type="PIR" id="A57500">
    <property type="entry name" value="S21023"/>
</dbReference>
<dbReference type="RefSeq" id="XP_016726961.1">
    <property type="nucleotide sequence ID" value="XM_016871472.1"/>
</dbReference>
<dbReference type="SMR" id="P31336"/>
<dbReference type="STRING" id="3635.P31336"/>
<dbReference type="PaxDb" id="3635-P31336"/>
<dbReference type="KEGG" id="ghi:107938348"/>
<dbReference type="Proteomes" id="UP000189702">
    <property type="component" value="Unplaced"/>
</dbReference>
<dbReference type="GO" id="GO:0009535">
    <property type="term" value="C:chloroplast thylakoid membrane"/>
    <property type="evidence" value="ECO:0007669"/>
    <property type="project" value="UniProtKB-SubCell"/>
</dbReference>
<dbReference type="GO" id="GO:0009523">
    <property type="term" value="C:photosystem II"/>
    <property type="evidence" value="ECO:0007669"/>
    <property type="project" value="UniProtKB-KW"/>
</dbReference>
<dbReference type="GO" id="GO:0015979">
    <property type="term" value="P:photosynthesis"/>
    <property type="evidence" value="ECO:0007669"/>
    <property type="project" value="UniProtKB-KW"/>
</dbReference>
<dbReference type="InterPro" id="IPR040296">
    <property type="entry name" value="PSBT"/>
</dbReference>
<dbReference type="PANTHER" id="PTHR34940">
    <property type="entry name" value="PHOTOSYSTEM II 5 KDA PROTEIN, CHLOROPLASTIC"/>
    <property type="match status" value="1"/>
</dbReference>
<dbReference type="PANTHER" id="PTHR34940:SF1">
    <property type="entry name" value="PHOTOSYSTEM II 5 KDA PROTEIN, CHLOROPLASTIC"/>
    <property type="match status" value="1"/>
</dbReference>
<organism>
    <name type="scientific">Gossypium hirsutum</name>
    <name type="common">Upland cotton</name>
    <name type="synonym">Gossypium mexicanum</name>
    <dbReference type="NCBI Taxonomy" id="3635"/>
    <lineage>
        <taxon>Eukaryota</taxon>
        <taxon>Viridiplantae</taxon>
        <taxon>Streptophyta</taxon>
        <taxon>Embryophyta</taxon>
        <taxon>Tracheophyta</taxon>
        <taxon>Spermatophyta</taxon>
        <taxon>Magnoliopsida</taxon>
        <taxon>eudicotyledons</taxon>
        <taxon>Gunneridae</taxon>
        <taxon>Pentapetalae</taxon>
        <taxon>rosids</taxon>
        <taxon>malvids</taxon>
        <taxon>Malvales</taxon>
        <taxon>Malvaceae</taxon>
        <taxon>Malvoideae</taxon>
        <taxon>Gossypium</taxon>
    </lineage>
</organism>